<name>ERG8_CANAL</name>
<gene>
    <name evidence="5" type="primary">ERG8</name>
    <name type="ordered locus">orf19.4606</name>
    <name type="ORF">CAALFM_C401870CA</name>
</gene>
<accession>A0A1D8PLH0</accession>
<comment type="function">
    <text evidence="2 3 7">Phosphomevalonate kinase; part of the second module of ergosterol biosynthesis pathway that includes the middle steps of the pathway (PubMed:11243736). ERG8 converts 5-phosphomevalonate to 5-diphosphomevalonate (By similarity). The second module is carried out in the vacuole and involves the formation of farnesyl diphosphate, which is also an important intermediate in the biosynthesis of ubiquinone, dolichol, heme and prenylated proteins. Activity by the mevalonate kinase ERG12 first converts mevalonate into 5-phosphomevalonate. 5-phosphomevalonate is then further converted to 5-diphosphomevalonate by the phosphomevalonate kinase ERG8. The diphosphomevalonate decarboxylase MVD then produces isopentenyl diphosphate. The isopentenyl-diphosphate delta-isomerase IDI1 then catalyzes the 1,3-allylic rearrangement of the homoallylic substrate isopentenyl (IPP) to its highly electrophilic allylic isomer, dimethylallyl diphosphate (DMAPP). Finally the farnesyl diphosphate synthase ERG20 catalyzes the sequential condensation of isopentenyl pyrophosphate with dimethylallyl pyrophosphate, and then with the resultant geranylpyrophosphate to the ultimate product farnesyl pyrophosphate (Probable).</text>
</comment>
<comment type="catalytic activity">
    <reaction evidence="2">
        <text>(R)-5-phosphomevalonate + ATP = (R)-5-diphosphomevalonate + ADP</text>
        <dbReference type="Rhea" id="RHEA:16341"/>
        <dbReference type="ChEBI" id="CHEBI:30616"/>
        <dbReference type="ChEBI" id="CHEBI:57557"/>
        <dbReference type="ChEBI" id="CHEBI:58146"/>
        <dbReference type="ChEBI" id="CHEBI:456216"/>
        <dbReference type="EC" id="2.7.4.2"/>
    </reaction>
    <physiologicalReaction direction="left-to-right" evidence="2">
        <dbReference type="Rhea" id="RHEA:16342"/>
    </physiologicalReaction>
</comment>
<comment type="pathway">
    <text evidence="7">Isoprenoid biosynthesis; isopentenyl diphosphate biosynthesis via mevalonate pathway; isopentenyl diphosphate from (R)-mevalonate: step 2/3.</text>
</comment>
<comment type="subcellular location">
    <subcellularLocation>
        <location evidence="6">Cytoplasm</location>
    </subcellularLocation>
</comment>
<comment type="induction">
    <text evidence="4">Expression is regulated by the transcription factor NRG1.</text>
</comment>
<comment type="similarity">
    <text evidence="6">Belongs to the GHMP kinase family. Mevalonate kinase subfamily.</text>
</comment>
<feature type="chain" id="PRO_0000454166" description="Phosphomevalonate kinase">
    <location>
        <begin position="1"/>
        <end position="432"/>
    </location>
</feature>
<feature type="binding site" evidence="1">
    <location>
        <position position="10"/>
    </location>
    <ligand>
        <name>ATP</name>
        <dbReference type="ChEBI" id="CHEBI:30616"/>
    </ligand>
</feature>
<feature type="binding site" evidence="1">
    <location>
        <begin position="142"/>
        <end position="148"/>
    </location>
    <ligand>
        <name>ATP</name>
        <dbReference type="ChEBI" id="CHEBI:30616"/>
    </ligand>
</feature>
<reference key="1">
    <citation type="journal article" date="2004" name="Proc. Natl. Acad. Sci. U.S.A.">
        <title>The diploid genome sequence of Candida albicans.</title>
        <authorList>
            <person name="Jones T."/>
            <person name="Federspiel N.A."/>
            <person name="Chibana H."/>
            <person name="Dungan J."/>
            <person name="Kalman S."/>
            <person name="Magee B.B."/>
            <person name="Newport G."/>
            <person name="Thorstenson Y.R."/>
            <person name="Agabian N."/>
            <person name="Magee P.T."/>
            <person name="Davis R.W."/>
            <person name="Scherer S."/>
        </authorList>
    </citation>
    <scope>NUCLEOTIDE SEQUENCE [LARGE SCALE GENOMIC DNA]</scope>
    <source>
        <strain>SC5314 / ATCC MYA-2876</strain>
    </source>
</reference>
<reference key="2">
    <citation type="journal article" date="2007" name="Genome Biol.">
        <title>Assembly of the Candida albicans genome into sixteen supercontigs aligned on the eight chromosomes.</title>
        <authorList>
            <person name="van het Hoog M."/>
            <person name="Rast T.J."/>
            <person name="Martchenko M."/>
            <person name="Grindle S."/>
            <person name="Dignard D."/>
            <person name="Hogues H."/>
            <person name="Cuomo C."/>
            <person name="Berriman M."/>
            <person name="Scherer S."/>
            <person name="Magee B.B."/>
            <person name="Whiteway M."/>
            <person name="Chibana H."/>
            <person name="Nantel A."/>
            <person name="Magee P.T."/>
        </authorList>
    </citation>
    <scope>GENOME REANNOTATION</scope>
    <source>
        <strain>SC5314 / ATCC MYA-2876</strain>
    </source>
</reference>
<reference key="3">
    <citation type="journal article" date="2013" name="Genome Biol.">
        <title>Assembly of a phased diploid Candida albicans genome facilitates allele-specific measurements and provides a simple model for repeat and indel structure.</title>
        <authorList>
            <person name="Muzzey D."/>
            <person name="Schwartz K."/>
            <person name="Weissman J.S."/>
            <person name="Sherlock G."/>
        </authorList>
    </citation>
    <scope>NUCLEOTIDE SEQUENCE [LARGE SCALE GENOMIC DNA]</scope>
    <scope>GENOME REANNOTATION</scope>
    <source>
        <strain>SC5314 / ATCC MYA-2876</strain>
    </source>
</reference>
<reference key="4">
    <citation type="journal article" date="2001" name="Mol. Genet. Metab.">
        <title>Nonorthologous gene displacement of phosphomevalonate kinase.</title>
        <authorList>
            <person name="Houten S.M."/>
            <person name="Waterham H.R."/>
        </authorList>
    </citation>
    <scope>IDENTIFICATION</scope>
    <scope>FUNCTION</scope>
</reference>
<reference key="5">
    <citation type="journal article" date="2001" name="Mol. Microbiol.">
        <title>Transcript profiling in Candida albicans reveals new cellular functions for the transcriptional repressors CaTup1, CaMig1 and CaNrg1.</title>
        <authorList>
            <person name="Murad A.M."/>
            <person name="d'Enfert C."/>
            <person name="Gaillardin C."/>
            <person name="Tournu H."/>
            <person name="Tekaia F."/>
            <person name="Talibi D."/>
            <person name="Marechal D."/>
            <person name="Marchais V."/>
            <person name="Cottin J."/>
            <person name="Brown A.J."/>
        </authorList>
    </citation>
    <scope>INDUCTION</scope>
</reference>
<reference key="6">
    <citation type="journal article" date="2003" name="Med. Mycol.">
        <title>Antifungal activity of fluconazole in combination with lovastatin and their effects on gene expression in the ergosterol and prenylation pathways in Candida albicans.</title>
        <authorList>
            <person name="Song J.L."/>
            <person name="Lyons C.N."/>
            <person name="Holleman S."/>
            <person name="Oliver B.G."/>
            <person name="White T.C."/>
        </authorList>
    </citation>
    <scope>FUNCTION</scope>
</reference>
<keyword id="KW-0067">ATP-binding</keyword>
<keyword id="KW-0963">Cytoplasm</keyword>
<keyword id="KW-0418">Kinase</keyword>
<keyword id="KW-0444">Lipid biosynthesis</keyword>
<keyword id="KW-0443">Lipid metabolism</keyword>
<keyword id="KW-0547">Nucleotide-binding</keyword>
<keyword id="KW-1185">Reference proteome</keyword>
<keyword id="KW-0752">Steroid biosynthesis</keyword>
<keyword id="KW-0753">Steroid metabolism</keyword>
<keyword id="KW-0808">Transferase</keyword>
<evidence type="ECO:0000250" key="1">
    <source>
        <dbReference type="UniProtKB" id="P17256"/>
    </source>
</evidence>
<evidence type="ECO:0000250" key="2">
    <source>
        <dbReference type="UniProtKB" id="P24521"/>
    </source>
</evidence>
<evidence type="ECO:0000269" key="3">
    <source>
    </source>
</evidence>
<evidence type="ECO:0000269" key="4">
    <source>
    </source>
</evidence>
<evidence type="ECO:0000303" key="5">
    <source>
    </source>
</evidence>
<evidence type="ECO:0000305" key="6"/>
<evidence type="ECO:0000305" key="7">
    <source>
    </source>
</evidence>
<protein>
    <recommendedName>
        <fullName evidence="5">Phosphomevalonate kinase</fullName>
        <ecNumber evidence="2">2.7.4.2</ecNumber>
    </recommendedName>
</protein>
<sequence>MSKAFSAPGKAFLAGGYLVLEPIYDAYVTALSSRMHAVITPKGTSLKESRIKISSPQFANGEWEYHISSNTEKPKEVQSRINPFLEATIFIVLAYIQPTEAFDLEIIIYSDPGYHSQEDTETKTSSNGEKTFLYHSRAITEVEKTGLGSSAGLVSVVATSLLSHFIPNVISTNKDILHNVAQIAHCYAQKKIGSGFDVATAIYGSIVYRRFQPALINDVFQVLESDPEKFPTELKKLIASNWEFKHERCTLPHGIKLLMGDVKGGSETPKLVSRVLQWKKEKPEESSVVYDQLNSANLQFMKELREMREKYDSDPETYIKELDHSIEPLTVAIKNIRKGLQALTQKSEVPIEPDVQTQLLDRCQEIPGCVGGVVPGAGGYDAIAVLVLENQVGNFKQKTLENPDYFHNVYWVDLEEQTEGVLEEKPEDYIGL</sequence>
<proteinExistence type="evidence at transcript level"/>
<dbReference type="EC" id="2.7.4.2" evidence="2"/>
<dbReference type="EMBL" id="CP017626">
    <property type="protein sequence ID" value="AOW28958.1"/>
    <property type="molecule type" value="Genomic_DNA"/>
</dbReference>
<dbReference type="RefSeq" id="XP_722678.1">
    <property type="nucleotide sequence ID" value="XM_717585.1"/>
</dbReference>
<dbReference type="SMR" id="A0A1D8PLH0"/>
<dbReference type="FunCoup" id="A0A1D8PLH0">
    <property type="interactions" value="127"/>
</dbReference>
<dbReference type="STRING" id="237561.A0A1D8PLH0"/>
<dbReference type="EnsemblFungi" id="C4_01870C_A-T">
    <property type="protein sequence ID" value="C4_01870C_A-T-p1"/>
    <property type="gene ID" value="C4_01870C_A"/>
</dbReference>
<dbReference type="GeneID" id="3635640"/>
<dbReference type="KEGG" id="cal:CAALFM_C401870CA"/>
<dbReference type="CGD" id="CAL0000200676">
    <property type="gene designation" value="ERG8"/>
</dbReference>
<dbReference type="VEuPathDB" id="FungiDB:C4_01870C_A"/>
<dbReference type="eggNOG" id="KOG4519">
    <property type="taxonomic scope" value="Eukaryota"/>
</dbReference>
<dbReference type="InParanoid" id="A0A1D8PLH0"/>
<dbReference type="OrthoDB" id="10262935at2759"/>
<dbReference type="UniPathway" id="UPA00057">
    <property type="reaction ID" value="UER00099"/>
</dbReference>
<dbReference type="Proteomes" id="UP000000559">
    <property type="component" value="Chromosome 4"/>
</dbReference>
<dbReference type="GO" id="GO:0005777">
    <property type="term" value="C:peroxisome"/>
    <property type="evidence" value="ECO:0000318"/>
    <property type="project" value="GO_Central"/>
</dbReference>
<dbReference type="GO" id="GO:0005524">
    <property type="term" value="F:ATP binding"/>
    <property type="evidence" value="ECO:0007669"/>
    <property type="project" value="UniProtKB-KW"/>
</dbReference>
<dbReference type="GO" id="GO:0004631">
    <property type="term" value="F:phosphomevalonate kinase activity"/>
    <property type="evidence" value="ECO:0000318"/>
    <property type="project" value="GO_Central"/>
</dbReference>
<dbReference type="GO" id="GO:0006696">
    <property type="term" value="P:ergosterol biosynthetic process"/>
    <property type="evidence" value="ECO:0000318"/>
    <property type="project" value="GO_Central"/>
</dbReference>
<dbReference type="GO" id="GO:0010142">
    <property type="term" value="P:farnesyl diphosphate biosynthetic process, mevalonate pathway"/>
    <property type="evidence" value="ECO:0000318"/>
    <property type="project" value="GO_Central"/>
</dbReference>
<dbReference type="GO" id="GO:0019287">
    <property type="term" value="P:isopentenyl diphosphate biosynthetic process, mevalonate pathway"/>
    <property type="evidence" value="ECO:0000318"/>
    <property type="project" value="GO_Central"/>
</dbReference>
<dbReference type="GO" id="GO:0031388">
    <property type="term" value="P:organic acid phosphorylation"/>
    <property type="evidence" value="ECO:0007669"/>
    <property type="project" value="EnsemblFungi"/>
</dbReference>
<dbReference type="FunFam" id="3.30.70.890:FF:000018">
    <property type="entry name" value="Phosphomevalonate kinase"/>
    <property type="match status" value="1"/>
</dbReference>
<dbReference type="FunFam" id="3.30.230.10:FF:000069">
    <property type="entry name" value="Probable phosphomevalonate kinase"/>
    <property type="match status" value="1"/>
</dbReference>
<dbReference type="Gene3D" id="3.30.230.10">
    <property type="match status" value="1"/>
</dbReference>
<dbReference type="Gene3D" id="3.30.70.890">
    <property type="entry name" value="GHMP kinase, C-terminal domain"/>
    <property type="match status" value="1"/>
</dbReference>
<dbReference type="InterPro" id="IPR016005">
    <property type="entry name" value="Erg8"/>
</dbReference>
<dbReference type="InterPro" id="IPR036554">
    <property type="entry name" value="GHMP_kinase_C_sf"/>
</dbReference>
<dbReference type="InterPro" id="IPR006204">
    <property type="entry name" value="GHMP_kinase_N_dom"/>
</dbReference>
<dbReference type="InterPro" id="IPR035102">
    <property type="entry name" value="Phosphomevalonate_kinase"/>
</dbReference>
<dbReference type="InterPro" id="IPR020568">
    <property type="entry name" value="Ribosomal_Su5_D2-typ_SF"/>
</dbReference>
<dbReference type="InterPro" id="IPR014721">
    <property type="entry name" value="Ribsml_uS5_D2-typ_fold_subgr"/>
</dbReference>
<dbReference type="PANTHER" id="PTHR31814">
    <property type="match status" value="1"/>
</dbReference>
<dbReference type="PANTHER" id="PTHR31814:SF2">
    <property type="entry name" value="PHOSPHOMEVALONATE KINASE"/>
    <property type="match status" value="1"/>
</dbReference>
<dbReference type="Pfam" id="PF00288">
    <property type="entry name" value="GHMP_kinases_N"/>
    <property type="match status" value="1"/>
</dbReference>
<dbReference type="PIRSF" id="PIRSF017288">
    <property type="entry name" value="PMK_GHMP_euk"/>
    <property type="match status" value="1"/>
</dbReference>
<dbReference type="SUPFAM" id="SSF54211">
    <property type="entry name" value="Ribosomal protein S5 domain 2-like"/>
    <property type="match status" value="1"/>
</dbReference>
<organism>
    <name type="scientific">Candida albicans (strain SC5314 / ATCC MYA-2876)</name>
    <name type="common">Yeast</name>
    <dbReference type="NCBI Taxonomy" id="237561"/>
    <lineage>
        <taxon>Eukaryota</taxon>
        <taxon>Fungi</taxon>
        <taxon>Dikarya</taxon>
        <taxon>Ascomycota</taxon>
        <taxon>Saccharomycotina</taxon>
        <taxon>Pichiomycetes</taxon>
        <taxon>Debaryomycetaceae</taxon>
        <taxon>Candida/Lodderomyces clade</taxon>
        <taxon>Candida</taxon>
    </lineage>
</organism>